<comment type="function">
    <text evidence="1 2 8 9 11">Highly reducing polyketide synthase; part of the cla gene cluster that produces clavatol and ortho-quinone methide (PubMed:30811183). The clavatol biosynthesis cluster cla and the terrestric acid cluster tra are both involved in the production of peniphenones and penilactones (PubMed:30811183). The non-reducing PKS claF is responsible for the formation of clavatol from successive condensations of 3 malonyl-CoA units, presumably with a simple acetyl-CoA starter unit, and 2 methylation steps (PubMed:30811183). The esterase claE probably collaborates with claF by catalyzing the hydrolysis of ACP-bound acyl intermediates to free the ACP from stalled intermediates (By similarity). The clavatol oxidase claD then converts clavatol to hydroxyclavatol (PubMed:30811183). Spontaneous dehydration of hydroxyclavatol leads to the accumulation of the highly active ortho-quinone methide (PubMed:30811183, PubMed:31860310). On the other hand, the PKS-NRPS hybrid traA is involved in the formation of crustosic acid, with the help of traB and traD (PubMed:30811183). The polyketide synthase module (PKS) of traA is responsible for the synthesis of the polyketide backbone via the condensation of an acetyl-CoA starter unit with 3 malonyl-CoA units (PubMed:30811183). The downstream nonribosomal peptide synthetase (NRPS) module then amidates the carboxyl end of the polyketide with L-malic acid (PubMed:30811183). Because traA lacks a designated enoylreductase (ER) domain, the required activity is provided the enoyl reductase traG (By similarity). Crustosic acid undergoes decarboxylation and isomerization to the terrestric acid, catalyzed by the 2-oxoglutarate-dependent dioxygenase traH (PubMed:30811183). Both acids are further converted to the 2 gamma-butyrolactones (R)-5-methyltetronic acid and (S)-5-carboxylmethyltetronic acid, with involvement of the cytochrome P450 monooxygenase claJ (PubMed:30811183). Spontaneous addition of the methide to these gamma-butyrolactones leads to peniphenone D and penilactone D, which undergo again stereospecific attacking by methide to give penilactones A and B (PubMed:30811183, PubMed:31860310). The function of the highly reducing polyketide synthase claI has not been investigated yet (Probable).</text>
</comment>
<comment type="cofactor">
    <cofactor evidence="3">
        <name>pantetheine 4'-phosphate</name>
        <dbReference type="ChEBI" id="CHEBI:47942"/>
    </cofactor>
    <text evidence="3">Binds 1 phosphopantetheine covalently.</text>
</comment>
<comment type="pathway">
    <text evidence="11">Secondary metabolite biosynthesis.</text>
</comment>
<comment type="domain">
    <text evidence="11">Multidomain protein; including a ketosynthase (KS) that catalyzes repeated decarboxylative condensation to elongate the polyketide backbone; a malonyl-CoA:ACP transacylase (MAT) that selects and transfers the extender unit malonyl-CoA; a dehydratase (DH) domain that reduces hydroxyl groups to enoyl groups; an enoylreductase (ER) domain that reduces enoyl groups to alkyl group; a ketoreductase (KR) domain that catalyzes beta-ketoreduction steps; and an acyl-carrier protein (ACP) that serves as the tether of the growing and completed polyketide via its phosphopantetheinyl arm.</text>
</comment>
<feature type="chain" id="PRO_0000455055" description="Highly reducing polyketide synthase claI">
    <location>
        <begin position="1"/>
        <end position="2346"/>
    </location>
</feature>
<feature type="domain" description="Ketosynthase family 3 (KS3)" evidence="5 11">
    <location>
        <begin position="10"/>
        <end position="412"/>
    </location>
</feature>
<feature type="domain" description="PKS/mFAS DH" evidence="6">
    <location>
        <begin position="912"/>
        <end position="1218"/>
    </location>
</feature>
<feature type="domain" description="Carrier" evidence="4">
    <location>
        <begin position="2258"/>
        <end position="2336"/>
    </location>
</feature>
<feature type="region of interest" description="Malonyl-CoA:ACP transacylase (MAT) domain" evidence="3 11">
    <location>
        <begin position="530"/>
        <end position="842"/>
    </location>
</feature>
<feature type="region of interest" description="Dehydratase (DH) domain" evidence="3 11">
    <location>
        <begin position="912"/>
        <end position="1213"/>
    </location>
</feature>
<feature type="region of interest" description="N-terminal hotdog fold" evidence="6">
    <location>
        <begin position="912"/>
        <end position="1048"/>
    </location>
</feature>
<feature type="region of interest" description="C-terminal hotdog fold" evidence="6">
    <location>
        <begin position="1060"/>
        <end position="1218"/>
    </location>
</feature>
<feature type="region of interest" description="Enoyl reductase (ER) domain" evidence="3 11">
    <location>
        <begin position="1633"/>
        <end position="1946"/>
    </location>
</feature>
<feature type="region of interest" description="Ketoreductase (KR) domain" evidence="3 11">
    <location>
        <begin position="1972"/>
        <end position="2151"/>
    </location>
</feature>
<feature type="active site" description="For beta-ketoacyl synthase activity" evidence="5">
    <location>
        <position position="183"/>
    </location>
</feature>
<feature type="active site" description="For beta-ketoacyl synthase activity" evidence="5">
    <location>
        <position position="295"/>
    </location>
</feature>
<feature type="active site" description="For beta-ketoacyl synthase activity" evidence="5">
    <location>
        <position position="335"/>
    </location>
</feature>
<feature type="active site" description="For malonyltransferase activity" evidence="7">
    <location>
        <position position="622"/>
    </location>
</feature>
<feature type="active site" description="Proton acceptor; for dehydratase activity" evidence="6">
    <location>
        <position position="944"/>
    </location>
</feature>
<feature type="active site" description="Proton donor; for dehydratase activity" evidence="6">
    <location>
        <position position="1124"/>
    </location>
</feature>
<feature type="modified residue" description="O-(pantetheine 4'-phosphoryl)serine" evidence="4">
    <location>
        <position position="2296"/>
    </location>
</feature>
<accession>A0A481WR96</accession>
<evidence type="ECO:0000250" key="1">
    <source>
        <dbReference type="UniProtKB" id="A0A0E0RXA7"/>
    </source>
</evidence>
<evidence type="ECO:0000250" key="2">
    <source>
        <dbReference type="UniProtKB" id="A0A161CKG1"/>
    </source>
</evidence>
<evidence type="ECO:0000255" key="3"/>
<evidence type="ECO:0000255" key="4">
    <source>
        <dbReference type="PROSITE-ProRule" id="PRU00258"/>
    </source>
</evidence>
<evidence type="ECO:0000255" key="5">
    <source>
        <dbReference type="PROSITE-ProRule" id="PRU01348"/>
    </source>
</evidence>
<evidence type="ECO:0000255" key="6">
    <source>
        <dbReference type="PROSITE-ProRule" id="PRU01363"/>
    </source>
</evidence>
<evidence type="ECO:0000255" key="7">
    <source>
        <dbReference type="PROSITE-ProRule" id="PRU10022"/>
    </source>
</evidence>
<evidence type="ECO:0000269" key="8">
    <source>
    </source>
</evidence>
<evidence type="ECO:0000269" key="9">
    <source>
    </source>
</evidence>
<evidence type="ECO:0000303" key="10">
    <source>
    </source>
</evidence>
<evidence type="ECO:0000305" key="11">
    <source>
    </source>
</evidence>
<keyword id="KW-0012">Acyltransferase</keyword>
<keyword id="KW-0511">Multifunctional enzyme</keyword>
<keyword id="KW-0521">NADP</keyword>
<keyword id="KW-0560">Oxidoreductase</keyword>
<keyword id="KW-0596">Phosphopantetheine</keyword>
<keyword id="KW-0597">Phosphoprotein</keyword>
<keyword id="KW-0808">Transferase</keyword>
<name>CLAI_PENCR</name>
<proteinExistence type="inferred from homology"/>
<gene>
    <name evidence="10" type="primary">claI</name>
</gene>
<sequence>MGDAPIQPQTPAIAVVGMACRLPGSNNSIHAFWNFLKQARQASNTVPESRFNVGAHADGSGKPKTMTSVPGMFLEDIDIGAFDAGFFNISPAEAMAMDPQQRQLLEVAYECLENSGISVDAIFGREMGCFVGSFVGDYADMMARDPEERPTTAATGIGRAILSNRISHFFNLKGPSMTIDTGCSGSLVAVDLACRYLEAGDIESAFVAGSGILHGWADGYAKSEGVNCVMLKNLDSAIRDGDPIRAVIRGWATNSDGYTPGITHPSVDAQVACIKRAYAKAGIEDYSQTGYLECHGTGTPIGDAVETTAIANVFAQSRDDSRPLIIGSVKSNIGHSEAASGLSGLIKSVMAIENGVIPGTPSFITPNPNINFQALRLHVSQTSIPWPLNTIRRASINSFGYGGTNCHLIVEDARLHLGVEQNETYNSSLCSSTSLSLDEDDPRDVVYPRPYIIVLSAVDDDSLTINCKKLLRHLADLHVHLKLPDLSYTLATRRSHHSKRAFAVSNSLNLHARDFMRGQKQFENPRIGFIFTGQGSQWPQMGKDLVRTFPRALEIISEMDAVLQGLPDAPTWSLLDMLVEPHDASRIRQPEISQPLVTAIQLTLVALLEDWNIFPDNVIGHSSGEIAAAYAAGYISKEDAIINAFYRGHAAKVASDSNLSVGMMAVGLGKDEIRPHLEDLADSVYVACVNSPRSITLSGVKTSLEMLRDRLSSVGIFVRILQVDLAYHSPFMKTIGDRYEHSLGQNLPVVGEQPSNTRHTSMFSTVTGEVIKNNPDSQYWRKNMCSPVQFWQGLAAMLSDSEPDLLVEIGPSNTLAGPVRQTNDNLANSSKVEYFSALKRGEDPIGALFDLCGQLYLRGCPIKLERVNRGYEQTNTPPAIVDLPNYGWNHSFSYWNENESSKDWRFRRYLPHDLLGSKILGTTWHTPSWKNTLRLRSLPWLEDHKIGSDVIFPAAGYISMAIEALYQATCAVNEQHAGFSISQLHFSLRNVEFKRAMILDHTSDTRLVLTLESQKGINSWRLFRISSFDGKQWTEHCTGLIRTSEEDSLVQKDLVMPKMIHATPAQVWYRKFADIGYGYGPSFEKMLLVEARVGAAQNRCVISMQAPAAAQSPSFYPIHPTCLDACLQSVFPSLWQGDHTAISTLLLPARIDSLVIHPQPNSINSNVASAKSTYSGRGRLQDRTSWSSDCSLNREEDGKCVLRINGLRFSSVDLGSVQPAAQFWYRSVWCPDITKWSFMPQKHWIPRPNTVNELINWVVHKHGEVSIIELNWDSDDASSLWLDRADHPMRDLTKKYRLLLSDHESLVKSQNLFPNHASSMQMILDRDDPLSGPEWPKMQLVILKSSDCSVHDSSMGRLLGQISEIMSTDGMLVIVAQSLGSDSHSNDARSDSSVFMEHEDRSKSYVPFSHLLSLDLPSSAKHVQLYSRASPAPSCPPQPVALYSFQKTSPISKGLRESLTQNNISLSEVSIHGPETVEIGIGLVVDEIYAPLLCNISSQQWESLKTLFERETPVLWVTQGAQHQVTNPDSSLIYGYLRSLRAEGNASSRFVILDVENGDSPGSRTAITTLLSEMSSSPDRFDHEWEFCERSGIIHVNRIYQDRKLNNLDDIEPAQTSIASCDEKVALHATHLGSLEALQWTQEDTEDSILAPGDVEVKIDVAGLNFKDVALAMGIVHGDEYRLGHEGSGRIQRVGSQTAGYQVGDRVAVFSIGSFANRIQVSTELIHHIPDNMSFEDAATLPLVYSTALYSLLDVANLQANQSVLIHSATGGLGIACIQIAQYIGAKVYATAGTQEKRELLCKEYSIPESQVFSSRDTRFVAGIRGATQGGGVDVIVNTLTGDLLHESWMLCADGGIFVELGKKDIIERNSLSMEPFDRNCSFRAVDLSHKQITDTMKKGLLTRIFDMIKCGNIGPIRPQTTFALNDIQSAFAHMRSARHIGKILILAKDDADTSVPVHSSRRPISIPGDRTYLIVGGLRGLCGSLAICLAQRGAKHITIISRSGCNDERSKAIIADCENLGCRIVDAVGDVTSLQHVKNVFQKADPPIRGVIHGAMVLRDKPIETMSAVDFHQTISSKVKGAWNIHHAAAEQDKSQSLEFFTMLSSISGVVGQKGQANYAAANVFLDSFAAYRCSLGLPAHSLDLGVVDAIGVAAEKGGMERYFNLEHWPRIKESKLHEILCISIDEQKKARYSQLITGLPSGISQLPILSQDARFSILCAEDSQTEGHQPVSPSKDTSSKELYEFRLLVKAMKAKSQLVEKAVTLCGLQLSRLLYLKNQVIDANKSLAAYGLDSLIAIEFRNWLKKELAVEMSTFEVIGASCLHALAEKMVSKVEAGVPVVEVV</sequence>
<dbReference type="EC" id="2.3.1.-" evidence="11"/>
<dbReference type="EMBL" id="MK360918">
    <property type="protein sequence ID" value="QBK15047.1"/>
    <property type="molecule type" value="Genomic_DNA"/>
</dbReference>
<dbReference type="SMR" id="A0A481WR96"/>
<dbReference type="GO" id="GO:0004312">
    <property type="term" value="F:fatty acid synthase activity"/>
    <property type="evidence" value="ECO:0007669"/>
    <property type="project" value="TreeGrafter"/>
</dbReference>
<dbReference type="GO" id="GO:0016491">
    <property type="term" value="F:oxidoreductase activity"/>
    <property type="evidence" value="ECO:0007669"/>
    <property type="project" value="UniProtKB-KW"/>
</dbReference>
<dbReference type="GO" id="GO:0031177">
    <property type="term" value="F:phosphopantetheine binding"/>
    <property type="evidence" value="ECO:0007669"/>
    <property type="project" value="InterPro"/>
</dbReference>
<dbReference type="GO" id="GO:0006633">
    <property type="term" value="P:fatty acid biosynthetic process"/>
    <property type="evidence" value="ECO:0007669"/>
    <property type="project" value="TreeGrafter"/>
</dbReference>
<dbReference type="GO" id="GO:1901336">
    <property type="term" value="P:lactone biosynthetic process"/>
    <property type="evidence" value="ECO:0007669"/>
    <property type="project" value="UniProtKB-ARBA"/>
</dbReference>
<dbReference type="GO" id="GO:0030639">
    <property type="term" value="P:polyketide biosynthetic process"/>
    <property type="evidence" value="ECO:0007669"/>
    <property type="project" value="UniProtKB-ARBA"/>
</dbReference>
<dbReference type="CDD" id="cd05195">
    <property type="entry name" value="enoyl_red"/>
    <property type="match status" value="1"/>
</dbReference>
<dbReference type="CDD" id="cd00833">
    <property type="entry name" value="PKS"/>
    <property type="match status" value="1"/>
</dbReference>
<dbReference type="FunFam" id="3.40.50.720:FF:000209">
    <property type="entry name" value="Polyketide synthase Pks12"/>
    <property type="match status" value="1"/>
</dbReference>
<dbReference type="Gene3D" id="3.30.70.3290">
    <property type="match status" value="1"/>
</dbReference>
<dbReference type="Gene3D" id="3.40.47.10">
    <property type="match status" value="2"/>
</dbReference>
<dbReference type="Gene3D" id="1.10.1200.10">
    <property type="entry name" value="ACP-like"/>
    <property type="match status" value="1"/>
</dbReference>
<dbReference type="Gene3D" id="3.40.366.10">
    <property type="entry name" value="Malonyl-Coenzyme A Acyl Carrier Protein, domain 2"/>
    <property type="match status" value="1"/>
</dbReference>
<dbReference type="Gene3D" id="3.90.180.10">
    <property type="entry name" value="Medium-chain alcohol dehydrogenases, catalytic domain"/>
    <property type="match status" value="1"/>
</dbReference>
<dbReference type="Gene3D" id="3.40.50.720">
    <property type="entry name" value="NAD(P)-binding Rossmann-like Domain"/>
    <property type="match status" value="1"/>
</dbReference>
<dbReference type="Gene3D" id="3.10.129.110">
    <property type="entry name" value="Polyketide synthase dehydratase"/>
    <property type="match status" value="1"/>
</dbReference>
<dbReference type="InterPro" id="IPR001227">
    <property type="entry name" value="Ac_transferase_dom_sf"/>
</dbReference>
<dbReference type="InterPro" id="IPR036736">
    <property type="entry name" value="ACP-like_sf"/>
</dbReference>
<dbReference type="InterPro" id="IPR014043">
    <property type="entry name" value="Acyl_transferase_dom"/>
</dbReference>
<dbReference type="InterPro" id="IPR016035">
    <property type="entry name" value="Acyl_Trfase/lysoPLipase"/>
</dbReference>
<dbReference type="InterPro" id="IPR013154">
    <property type="entry name" value="ADH-like_N"/>
</dbReference>
<dbReference type="InterPro" id="IPR011032">
    <property type="entry name" value="GroES-like_sf"/>
</dbReference>
<dbReference type="InterPro" id="IPR014031">
    <property type="entry name" value="Ketoacyl_synth_C"/>
</dbReference>
<dbReference type="InterPro" id="IPR014030">
    <property type="entry name" value="Ketoacyl_synth_N"/>
</dbReference>
<dbReference type="InterPro" id="IPR016036">
    <property type="entry name" value="Malonyl_transacylase_ACP-bd"/>
</dbReference>
<dbReference type="InterPro" id="IPR036291">
    <property type="entry name" value="NAD(P)-bd_dom_sf"/>
</dbReference>
<dbReference type="InterPro" id="IPR056501">
    <property type="entry name" value="NAD-bd_HRPKS_sdrA"/>
</dbReference>
<dbReference type="InterPro" id="IPR032821">
    <property type="entry name" value="PKS_assoc"/>
</dbReference>
<dbReference type="InterPro" id="IPR020841">
    <property type="entry name" value="PKS_Beta-ketoAc_synthase_dom"/>
</dbReference>
<dbReference type="InterPro" id="IPR042104">
    <property type="entry name" value="PKS_dehydratase_sf"/>
</dbReference>
<dbReference type="InterPro" id="IPR020807">
    <property type="entry name" value="PKS_DH"/>
</dbReference>
<dbReference type="InterPro" id="IPR049551">
    <property type="entry name" value="PKS_DH_C"/>
</dbReference>
<dbReference type="InterPro" id="IPR049552">
    <property type="entry name" value="PKS_DH_N"/>
</dbReference>
<dbReference type="InterPro" id="IPR020843">
    <property type="entry name" value="PKS_ER"/>
</dbReference>
<dbReference type="InterPro" id="IPR013968">
    <property type="entry name" value="PKS_KR"/>
</dbReference>
<dbReference type="InterPro" id="IPR049900">
    <property type="entry name" value="PKS_mFAS_DH"/>
</dbReference>
<dbReference type="InterPro" id="IPR050091">
    <property type="entry name" value="PKS_NRPS_Biosynth_Enz"/>
</dbReference>
<dbReference type="InterPro" id="IPR020806">
    <property type="entry name" value="PKS_PP-bd"/>
</dbReference>
<dbReference type="InterPro" id="IPR009081">
    <property type="entry name" value="PP-bd_ACP"/>
</dbReference>
<dbReference type="InterPro" id="IPR016039">
    <property type="entry name" value="Thiolase-like"/>
</dbReference>
<dbReference type="PANTHER" id="PTHR43775:SF18">
    <property type="entry name" value="ENZYME, PUTATIVE (JCVI)-RELATED"/>
    <property type="match status" value="1"/>
</dbReference>
<dbReference type="PANTHER" id="PTHR43775">
    <property type="entry name" value="FATTY ACID SYNTHASE"/>
    <property type="match status" value="1"/>
</dbReference>
<dbReference type="Pfam" id="PF23297">
    <property type="entry name" value="ACP_SdgA_C"/>
    <property type="match status" value="1"/>
</dbReference>
<dbReference type="Pfam" id="PF00698">
    <property type="entry name" value="Acyl_transf_1"/>
    <property type="match status" value="1"/>
</dbReference>
<dbReference type="Pfam" id="PF08240">
    <property type="entry name" value="ADH_N"/>
    <property type="match status" value="1"/>
</dbReference>
<dbReference type="Pfam" id="PF13602">
    <property type="entry name" value="ADH_zinc_N_2"/>
    <property type="match status" value="1"/>
</dbReference>
<dbReference type="Pfam" id="PF16197">
    <property type="entry name" value="KAsynt_C_assoc"/>
    <property type="match status" value="1"/>
</dbReference>
<dbReference type="Pfam" id="PF00109">
    <property type="entry name" value="ketoacyl-synt"/>
    <property type="match status" value="1"/>
</dbReference>
<dbReference type="Pfam" id="PF02801">
    <property type="entry name" value="Ketoacyl-synt_C"/>
    <property type="match status" value="1"/>
</dbReference>
<dbReference type="Pfam" id="PF08659">
    <property type="entry name" value="KR"/>
    <property type="match status" value="1"/>
</dbReference>
<dbReference type="Pfam" id="PF23114">
    <property type="entry name" value="NAD-bd_HRPKS_sdrA"/>
    <property type="match status" value="1"/>
</dbReference>
<dbReference type="Pfam" id="PF21089">
    <property type="entry name" value="PKS_DH_N"/>
    <property type="match status" value="1"/>
</dbReference>
<dbReference type="Pfam" id="PF14765">
    <property type="entry name" value="PS-DH"/>
    <property type="match status" value="1"/>
</dbReference>
<dbReference type="SMART" id="SM00827">
    <property type="entry name" value="PKS_AT"/>
    <property type="match status" value="1"/>
</dbReference>
<dbReference type="SMART" id="SM00826">
    <property type="entry name" value="PKS_DH"/>
    <property type="match status" value="1"/>
</dbReference>
<dbReference type="SMART" id="SM00829">
    <property type="entry name" value="PKS_ER"/>
    <property type="match status" value="1"/>
</dbReference>
<dbReference type="SMART" id="SM00822">
    <property type="entry name" value="PKS_KR"/>
    <property type="match status" value="1"/>
</dbReference>
<dbReference type="SMART" id="SM00825">
    <property type="entry name" value="PKS_KS"/>
    <property type="match status" value="1"/>
</dbReference>
<dbReference type="SMART" id="SM00823">
    <property type="entry name" value="PKS_PP"/>
    <property type="match status" value="1"/>
</dbReference>
<dbReference type="SUPFAM" id="SSF47336">
    <property type="entry name" value="ACP-like"/>
    <property type="match status" value="1"/>
</dbReference>
<dbReference type="SUPFAM" id="SSF52151">
    <property type="entry name" value="FabD/lysophospholipase-like"/>
    <property type="match status" value="1"/>
</dbReference>
<dbReference type="SUPFAM" id="SSF50129">
    <property type="entry name" value="GroES-like"/>
    <property type="match status" value="1"/>
</dbReference>
<dbReference type="SUPFAM" id="SSF51735">
    <property type="entry name" value="NAD(P)-binding Rossmann-fold domains"/>
    <property type="match status" value="2"/>
</dbReference>
<dbReference type="SUPFAM" id="SSF55048">
    <property type="entry name" value="Probable ACP-binding domain of malonyl-CoA ACP transacylase"/>
    <property type="match status" value="1"/>
</dbReference>
<dbReference type="SUPFAM" id="SSF53901">
    <property type="entry name" value="Thiolase-like"/>
    <property type="match status" value="1"/>
</dbReference>
<dbReference type="PROSITE" id="PS50075">
    <property type="entry name" value="CARRIER"/>
    <property type="match status" value="1"/>
</dbReference>
<dbReference type="PROSITE" id="PS52004">
    <property type="entry name" value="KS3_2"/>
    <property type="match status" value="1"/>
</dbReference>
<dbReference type="PROSITE" id="PS52019">
    <property type="entry name" value="PKS_MFAS_DH"/>
    <property type="match status" value="1"/>
</dbReference>
<organism>
    <name type="scientific">Penicillium crustosum</name>
    <name type="common">Blue mold fungus</name>
    <dbReference type="NCBI Taxonomy" id="36656"/>
    <lineage>
        <taxon>Eukaryota</taxon>
        <taxon>Fungi</taxon>
        <taxon>Dikarya</taxon>
        <taxon>Ascomycota</taxon>
        <taxon>Pezizomycotina</taxon>
        <taxon>Eurotiomycetes</taxon>
        <taxon>Eurotiomycetidae</taxon>
        <taxon>Eurotiales</taxon>
        <taxon>Aspergillaceae</taxon>
        <taxon>Penicillium</taxon>
    </lineage>
</organism>
<reference key="1">
    <citation type="journal article" date="2019" name="J. Am. Chem. Soc.">
        <title>Peniphenone and penilactone formation in Penicillium crustosum via 1,4-Michael additions of ortho-quinone methide from hydroxyclavatol to gamma-butyrolactones from Crustosic Acid.</title>
        <authorList>
            <person name="Fan J."/>
            <person name="Liao G."/>
            <person name="Kindinger F."/>
            <person name="Ludwig-Radtke L."/>
            <person name="Yin W.B."/>
            <person name="Li S.M."/>
        </authorList>
    </citation>
    <scope>NUCLEOTIDE SEQUENCE [GENOMIC DNA]</scope>
    <scope>FUNCTION</scope>
    <scope>DOMAIN</scope>
    <source>
        <strain>PRB-2</strain>
    </source>
</reference>
<reference key="2">
    <citation type="journal article" date="2020" name="J. Org. Chem.">
        <title>Increasing Structural Diversity of Natural Products by Michael Addition with ortho-Quinone Methide as the Acceptor.</title>
        <authorList>
            <person name="Liao G."/>
            <person name="Fan J."/>
            <person name="Ludwig-Radtke L."/>
            <person name="Backhaus K."/>
            <person name="Li S.M."/>
        </authorList>
    </citation>
    <scope>FUNCTION</scope>
</reference>
<protein>
    <recommendedName>
        <fullName evidence="10">Highly reducing polyketide synthase claI</fullName>
        <ecNumber evidence="11">2.3.1.-</ecNumber>
    </recommendedName>
    <alternativeName>
        <fullName evidence="10">Clavatol biosynthesis cluster protein I</fullName>
    </alternativeName>
</protein>